<feature type="signal peptide">
    <location>
        <begin position="1"/>
        <end position="20"/>
    </location>
</feature>
<feature type="chain" id="PRO_0000021517" description="Cyclic nucleotide phosphodiesterase inhibitor">
    <location>
        <begin position="21"/>
        <end position="237"/>
    </location>
</feature>
<feature type="repeat" description="Cys-rich CT 1">
    <location>
        <begin position="57"/>
        <end position="81"/>
    </location>
</feature>
<feature type="repeat" description="Cys-rich CT 2">
    <location>
        <begin position="82"/>
        <end position="105"/>
    </location>
</feature>
<feature type="repeat" description="Cys-rich CT 3">
    <location>
        <begin position="116"/>
        <end position="139"/>
    </location>
</feature>
<feature type="repeat" description="Cys-rich CT 4">
    <location>
        <begin position="140"/>
        <end position="162"/>
    </location>
</feature>
<feature type="repeat" description="Cys-rich CT 5">
    <location>
        <begin position="163"/>
        <end position="186"/>
    </location>
</feature>
<feature type="glycosylation site" description="N-linked (GlcNAc...) asparagine" evidence="1">
    <location>
        <position position="28"/>
    </location>
</feature>
<feature type="glycosylation site" description="N-linked (GlcNAc...) asparagine" evidence="1">
    <location>
        <position position="65"/>
    </location>
</feature>
<feature type="glycosylation site" description="N-linked (GlcNAc...) asparagine" evidence="1">
    <location>
        <position position="70"/>
    </location>
</feature>
<feature type="glycosylation site" description="N-linked (GlcNAc...) asparagine" evidence="1">
    <location>
        <position position="153"/>
    </location>
</feature>
<feature type="glycosylation site" description="N-linked (GlcNAc...) asparagine" evidence="1">
    <location>
        <position position="207"/>
    </location>
</feature>
<organism>
    <name type="scientific">Dictyostelium discoideum</name>
    <name type="common">Social amoeba</name>
    <dbReference type="NCBI Taxonomy" id="44689"/>
    <lineage>
        <taxon>Eukaryota</taxon>
        <taxon>Amoebozoa</taxon>
        <taxon>Evosea</taxon>
        <taxon>Eumycetozoa</taxon>
        <taxon>Dictyostelia</taxon>
        <taxon>Dictyosteliales</taxon>
        <taxon>Dictyosteliaceae</taxon>
        <taxon>Dictyostelium</taxon>
    </lineage>
</organism>
<name>IPDE_DICDI</name>
<dbReference type="EMBL" id="X16057">
    <property type="protein sequence ID" value="CAA34193.1"/>
    <property type="molecule type" value="Genomic_DNA"/>
</dbReference>
<dbReference type="EMBL" id="AAFI02000023">
    <property type="protein sequence ID" value="EAL68104.1"/>
    <property type="molecule type" value="Genomic_DNA"/>
</dbReference>
<dbReference type="PIR" id="JQ0684">
    <property type="entry name" value="S08073"/>
</dbReference>
<dbReference type="RefSeq" id="XP_642109.1">
    <property type="nucleotide sequence ID" value="XM_637017.1"/>
</dbReference>
<dbReference type="FunCoup" id="P22549">
    <property type="interactions" value="668"/>
</dbReference>
<dbReference type="STRING" id="44689.P22549"/>
<dbReference type="GlyCosmos" id="P22549">
    <property type="glycosylation" value="5 sites, No reported glycans"/>
</dbReference>
<dbReference type="GlyGen" id="P22549">
    <property type="glycosylation" value="5 sites"/>
</dbReference>
<dbReference type="PaxDb" id="44689-DDB0214948"/>
<dbReference type="EnsemblProtists" id="EAL68104">
    <property type="protein sequence ID" value="EAL68104"/>
    <property type="gene ID" value="DDB_G0277863"/>
</dbReference>
<dbReference type="GeneID" id="8621320"/>
<dbReference type="KEGG" id="ddi:DDB_G0277863"/>
<dbReference type="dictyBase" id="DDB_G0277863">
    <property type="gene designation" value="pdiA"/>
</dbReference>
<dbReference type="VEuPathDB" id="AmoebaDB:DDB_G0277863"/>
<dbReference type="eggNOG" id="ENOG502RCST">
    <property type="taxonomic scope" value="Eukaryota"/>
</dbReference>
<dbReference type="HOGENOM" id="CLU_102388_0_0_1"/>
<dbReference type="InParanoid" id="P22549"/>
<dbReference type="OMA" id="ADCHCTK"/>
<dbReference type="PhylomeDB" id="P22549"/>
<dbReference type="PRO" id="PR:P22549"/>
<dbReference type="Proteomes" id="UP000002195">
    <property type="component" value="Chromosome 3"/>
</dbReference>
<dbReference type="GO" id="GO:0031012">
    <property type="term" value="C:extracellular matrix"/>
    <property type="evidence" value="ECO:0000318"/>
    <property type="project" value="GO_Central"/>
</dbReference>
<dbReference type="GO" id="GO:0005576">
    <property type="term" value="C:extracellular region"/>
    <property type="evidence" value="ECO:0000314"/>
    <property type="project" value="dictyBase"/>
</dbReference>
<dbReference type="GO" id="GO:0004857">
    <property type="term" value="F:enzyme inhibitor activity"/>
    <property type="evidence" value="ECO:0000314"/>
    <property type="project" value="dictyBase"/>
</dbReference>
<dbReference type="GO" id="GO:0031153">
    <property type="term" value="P:slug development involved in sorocarp development"/>
    <property type="evidence" value="ECO:0000315"/>
    <property type="project" value="dictyBase"/>
</dbReference>
<dbReference type="GO" id="GO:0099120">
    <property type="term" value="P:socially cooperative development"/>
    <property type="evidence" value="ECO:0000318"/>
    <property type="project" value="GO_Central"/>
</dbReference>
<dbReference type="InterPro" id="IPR052846">
    <property type="entry name" value="ECM-enzyme_regulator"/>
</dbReference>
<dbReference type="InterPro" id="IPR001673">
    <property type="entry name" value="S_mold_repeat"/>
</dbReference>
<dbReference type="PANTHER" id="PTHR31797:SF2">
    <property type="entry name" value="CYCLIC NUCLEOTIDE PHOSPHODIESTERASE INHIBITOR"/>
    <property type="match status" value="1"/>
</dbReference>
<dbReference type="PANTHER" id="PTHR31797">
    <property type="entry name" value="EXTRACELLULAR MATRIX PROTEIN A-RELATED"/>
    <property type="match status" value="1"/>
</dbReference>
<dbReference type="Pfam" id="PF00526">
    <property type="entry name" value="Dicty_CTDC"/>
    <property type="match status" value="5"/>
</dbReference>
<comment type="function">
    <text>PDI acts by binding stoichiometrically to cyclic nucleotide phosphodiesterase, changing the KM of the enzyme for cAMP from 10 uM to 2 mM.</text>
</comment>
<comment type="developmental stage">
    <text>Expressed early in development with little transcript remaining following aggregation.</text>
</comment>
<comment type="induction">
    <text>By starvation. Repressed by cAMP.</text>
</comment>
<reference key="1">
    <citation type="journal article" date="1990" name="Gene">
        <title>A developmentally regulated and cAMP-repressible gene of Dictyostelium discoideum: cloning and expression of the gene encoding cyclic nucleotide phosphodiesterase inhibitor.</title>
        <authorList>
            <person name="Wu L."/>
            <person name="Franke J."/>
        </authorList>
    </citation>
    <scope>NUCLEOTIDE SEQUENCE [GENOMIC DNA]</scope>
    <source>
        <strain>AX3</strain>
    </source>
</reference>
<reference key="2">
    <citation type="journal article" date="1991" name="Dev. Genet.">
        <title>Cyclic nucleotide phosphodiesterase of Dictyostelium discoideum and its glycoprotein inhibitor: structure and expression of their genes.</title>
        <authorList>
            <person name="Franke J."/>
            <person name="Faure M."/>
            <person name="Wu L."/>
            <person name="Hall A.L."/>
            <person name="Podgorski G.J."/>
            <person name="Kessin R.H."/>
        </authorList>
    </citation>
    <scope>NUCLEOTIDE SEQUENCE [GENOMIC DNA]</scope>
    <scope>PARTIAL PROTEIN SEQUENCE</scope>
</reference>
<reference key="3">
    <citation type="journal article" date="2005" name="Nature">
        <title>The genome of the social amoeba Dictyostelium discoideum.</title>
        <authorList>
            <person name="Eichinger L."/>
            <person name="Pachebat J.A."/>
            <person name="Gloeckner G."/>
            <person name="Rajandream M.A."/>
            <person name="Sucgang R."/>
            <person name="Berriman M."/>
            <person name="Song J."/>
            <person name="Olsen R."/>
            <person name="Szafranski K."/>
            <person name="Xu Q."/>
            <person name="Tunggal B."/>
            <person name="Kummerfeld S."/>
            <person name="Madera M."/>
            <person name="Konfortov B.A."/>
            <person name="Rivero F."/>
            <person name="Bankier A.T."/>
            <person name="Lehmann R."/>
            <person name="Hamlin N."/>
            <person name="Davies R."/>
            <person name="Gaudet P."/>
            <person name="Fey P."/>
            <person name="Pilcher K."/>
            <person name="Chen G."/>
            <person name="Saunders D."/>
            <person name="Sodergren E.J."/>
            <person name="Davis P."/>
            <person name="Kerhornou A."/>
            <person name="Nie X."/>
            <person name="Hall N."/>
            <person name="Anjard C."/>
            <person name="Hemphill L."/>
            <person name="Bason N."/>
            <person name="Farbrother P."/>
            <person name="Desany B."/>
            <person name="Just E."/>
            <person name="Morio T."/>
            <person name="Rost R."/>
            <person name="Churcher C.M."/>
            <person name="Cooper J."/>
            <person name="Haydock S."/>
            <person name="van Driessche N."/>
            <person name="Cronin A."/>
            <person name="Goodhead I."/>
            <person name="Muzny D.M."/>
            <person name="Mourier T."/>
            <person name="Pain A."/>
            <person name="Lu M."/>
            <person name="Harper D."/>
            <person name="Lindsay R."/>
            <person name="Hauser H."/>
            <person name="James K.D."/>
            <person name="Quiles M."/>
            <person name="Madan Babu M."/>
            <person name="Saito T."/>
            <person name="Buchrieser C."/>
            <person name="Wardroper A."/>
            <person name="Felder M."/>
            <person name="Thangavelu M."/>
            <person name="Johnson D."/>
            <person name="Knights A."/>
            <person name="Loulseged H."/>
            <person name="Mungall K.L."/>
            <person name="Oliver K."/>
            <person name="Price C."/>
            <person name="Quail M.A."/>
            <person name="Urushihara H."/>
            <person name="Hernandez J."/>
            <person name="Rabbinowitsch E."/>
            <person name="Steffen D."/>
            <person name="Sanders M."/>
            <person name="Ma J."/>
            <person name="Kohara Y."/>
            <person name="Sharp S."/>
            <person name="Simmonds M.N."/>
            <person name="Spiegler S."/>
            <person name="Tivey A."/>
            <person name="Sugano S."/>
            <person name="White B."/>
            <person name="Walker D."/>
            <person name="Woodward J.R."/>
            <person name="Winckler T."/>
            <person name="Tanaka Y."/>
            <person name="Shaulsky G."/>
            <person name="Schleicher M."/>
            <person name="Weinstock G.M."/>
            <person name="Rosenthal A."/>
            <person name="Cox E.C."/>
            <person name="Chisholm R.L."/>
            <person name="Gibbs R.A."/>
            <person name="Loomis W.F."/>
            <person name="Platzer M."/>
            <person name="Kay R.R."/>
            <person name="Williams J.G."/>
            <person name="Dear P.H."/>
            <person name="Noegel A.A."/>
            <person name="Barrell B.G."/>
            <person name="Kuspa A."/>
        </authorList>
    </citation>
    <scope>NUCLEOTIDE SEQUENCE [LARGE SCALE GENOMIC DNA]</scope>
    <source>
        <strain>AX4</strain>
    </source>
</reference>
<accession>P22549</accession>
<accession>Q54YU3</accession>
<evidence type="ECO:0000255" key="1"/>
<proteinExistence type="evidence at protein level"/>
<gene>
    <name type="primary">pdiA</name>
    <name type="synonym">pdi</name>
    <name type="ORF">DDB_G0277863</name>
</gene>
<protein>
    <recommendedName>
        <fullName>Cyclic nucleotide phosphodiesterase inhibitor</fullName>
        <shortName>PDI</shortName>
    </recommendedName>
</protein>
<sequence>MAKIIISLILLLSLFSFSYGAYNCNKLNCSSKNTKCRTFSCTSVVGCYYTDKCTSPDLCHNSACNASTGNCTLTTISCNDNNPCTDDFCHPGYGCYSVPNSCDPGVICQQNCNDNDPCTYDFCDALNICRHSETYCNDGDACTLNTCGVNGCNFTKISCDDNDPCTADYCSTLYGCYHEPIECSIKVPCNIDSDCNRNNGCETFTCNLSTNTCDYYAKNCGGWPCINNQCTTGSISN</sequence>
<keyword id="KW-0217">Developmental protein</keyword>
<keyword id="KW-0903">Direct protein sequencing</keyword>
<keyword id="KW-0325">Glycoprotein</keyword>
<keyword id="KW-1185">Reference proteome</keyword>
<keyword id="KW-0677">Repeat</keyword>
<keyword id="KW-0732">Signal</keyword>
<keyword id="KW-0346">Stress response</keyword>